<sequence>MDNIETILRLAEEKILLVQSLKVLQEYKVEFLGKNGIVTNELKKLGSLSEQDRKEFGLKINKLKEEIQNIIKAKEEILEEEELNLKLSSDKIDLSLPARRYKQGSIHPITQCMEELIQVFAKFGFSIEDGPNIENDFHNFTALNFEDDHPARQMHDTFYLKGQENDKPMLLRTHTSTVQIRAMKNGKPPFRFIAPGRTYRSDSDMTHTPMFHQIEGLVIDKDINMGHLKYVITEFIRCFFENSNIELRFRPSFFPFTEPSAEVDIRMSKTDKWLEVLGCGMVHPNVLKNVGIDNSQYQGFAFGLGVERFAMLKYNIKDLRQFFEGDMRWLKHYSFSSFDIPNLAGGLTK</sequence>
<protein>
    <recommendedName>
        <fullName evidence="1">Phenylalanine--tRNA ligase alpha subunit</fullName>
        <ecNumber evidence="1">6.1.1.20</ecNumber>
    </recommendedName>
    <alternativeName>
        <fullName evidence="1">Phenylalanyl-tRNA synthetase alpha subunit</fullName>
        <shortName evidence="1">PheRS</shortName>
    </alternativeName>
</protein>
<dbReference type="EC" id="6.1.1.20" evidence="1"/>
<dbReference type="EMBL" id="CP000087">
    <property type="protein sequence ID" value="ABE04735.1"/>
    <property type="molecule type" value="Genomic_DNA"/>
</dbReference>
<dbReference type="RefSeq" id="WP_011477323.1">
    <property type="nucleotide sequence ID" value="NC_007940.1"/>
</dbReference>
<dbReference type="SMR" id="Q1RIS9"/>
<dbReference type="KEGG" id="rbe:RBE_0654"/>
<dbReference type="eggNOG" id="COG0016">
    <property type="taxonomic scope" value="Bacteria"/>
</dbReference>
<dbReference type="HOGENOM" id="CLU_025086_0_1_5"/>
<dbReference type="OrthoDB" id="9800719at2"/>
<dbReference type="Proteomes" id="UP000001951">
    <property type="component" value="Chromosome"/>
</dbReference>
<dbReference type="GO" id="GO:0005737">
    <property type="term" value="C:cytoplasm"/>
    <property type="evidence" value="ECO:0007669"/>
    <property type="project" value="UniProtKB-SubCell"/>
</dbReference>
<dbReference type="GO" id="GO:0005524">
    <property type="term" value="F:ATP binding"/>
    <property type="evidence" value="ECO:0007669"/>
    <property type="project" value="UniProtKB-UniRule"/>
</dbReference>
<dbReference type="GO" id="GO:0000287">
    <property type="term" value="F:magnesium ion binding"/>
    <property type="evidence" value="ECO:0007669"/>
    <property type="project" value="UniProtKB-UniRule"/>
</dbReference>
<dbReference type="GO" id="GO:0004826">
    <property type="term" value="F:phenylalanine-tRNA ligase activity"/>
    <property type="evidence" value="ECO:0007669"/>
    <property type="project" value="UniProtKB-UniRule"/>
</dbReference>
<dbReference type="GO" id="GO:0000049">
    <property type="term" value="F:tRNA binding"/>
    <property type="evidence" value="ECO:0007669"/>
    <property type="project" value="InterPro"/>
</dbReference>
<dbReference type="GO" id="GO:0006432">
    <property type="term" value="P:phenylalanyl-tRNA aminoacylation"/>
    <property type="evidence" value="ECO:0007669"/>
    <property type="project" value="UniProtKB-UniRule"/>
</dbReference>
<dbReference type="CDD" id="cd00496">
    <property type="entry name" value="PheRS_alpha_core"/>
    <property type="match status" value="1"/>
</dbReference>
<dbReference type="FunFam" id="3.30.930.10:FF:000003">
    <property type="entry name" value="Phenylalanine--tRNA ligase alpha subunit"/>
    <property type="match status" value="1"/>
</dbReference>
<dbReference type="Gene3D" id="3.30.930.10">
    <property type="entry name" value="Bira Bifunctional Protein, Domain 2"/>
    <property type="match status" value="1"/>
</dbReference>
<dbReference type="HAMAP" id="MF_00281">
    <property type="entry name" value="Phe_tRNA_synth_alpha1"/>
    <property type="match status" value="1"/>
</dbReference>
<dbReference type="InterPro" id="IPR006195">
    <property type="entry name" value="aa-tRNA-synth_II"/>
</dbReference>
<dbReference type="InterPro" id="IPR045864">
    <property type="entry name" value="aa-tRNA-synth_II/BPL/LPL"/>
</dbReference>
<dbReference type="InterPro" id="IPR004529">
    <property type="entry name" value="Phe-tRNA-synth_IIc_asu"/>
</dbReference>
<dbReference type="InterPro" id="IPR004188">
    <property type="entry name" value="Phe-tRNA_ligase_II_N"/>
</dbReference>
<dbReference type="InterPro" id="IPR022911">
    <property type="entry name" value="Phe_tRNA_ligase_alpha1_bac"/>
</dbReference>
<dbReference type="InterPro" id="IPR002319">
    <property type="entry name" value="Phenylalanyl-tRNA_Synthase"/>
</dbReference>
<dbReference type="InterPro" id="IPR010978">
    <property type="entry name" value="tRNA-bd_arm"/>
</dbReference>
<dbReference type="NCBIfam" id="TIGR00468">
    <property type="entry name" value="pheS"/>
    <property type="match status" value="1"/>
</dbReference>
<dbReference type="PANTHER" id="PTHR11538:SF41">
    <property type="entry name" value="PHENYLALANINE--TRNA LIGASE, MITOCHONDRIAL"/>
    <property type="match status" value="1"/>
</dbReference>
<dbReference type="PANTHER" id="PTHR11538">
    <property type="entry name" value="PHENYLALANYL-TRNA SYNTHETASE"/>
    <property type="match status" value="1"/>
</dbReference>
<dbReference type="Pfam" id="PF02912">
    <property type="entry name" value="Phe_tRNA-synt_N"/>
    <property type="match status" value="1"/>
</dbReference>
<dbReference type="Pfam" id="PF01409">
    <property type="entry name" value="tRNA-synt_2d"/>
    <property type="match status" value="1"/>
</dbReference>
<dbReference type="SUPFAM" id="SSF55681">
    <property type="entry name" value="Class II aaRS and biotin synthetases"/>
    <property type="match status" value="1"/>
</dbReference>
<dbReference type="SUPFAM" id="SSF46589">
    <property type="entry name" value="tRNA-binding arm"/>
    <property type="match status" value="1"/>
</dbReference>
<dbReference type="PROSITE" id="PS50862">
    <property type="entry name" value="AA_TRNA_LIGASE_II"/>
    <property type="match status" value="1"/>
</dbReference>
<gene>
    <name evidence="1" type="primary">pheS</name>
    <name type="ordered locus">RBE_0654</name>
</gene>
<proteinExistence type="inferred from homology"/>
<feature type="chain" id="PRO_0000278010" description="Phenylalanine--tRNA ligase alpha subunit">
    <location>
        <begin position="1"/>
        <end position="349"/>
    </location>
</feature>
<feature type="binding site" evidence="1">
    <location>
        <position position="258"/>
    </location>
    <ligand>
        <name>Mg(2+)</name>
        <dbReference type="ChEBI" id="CHEBI:18420"/>
        <note>shared with beta subunit</note>
    </ligand>
</feature>
<organism>
    <name type="scientific">Rickettsia bellii (strain RML369-C)</name>
    <dbReference type="NCBI Taxonomy" id="336407"/>
    <lineage>
        <taxon>Bacteria</taxon>
        <taxon>Pseudomonadati</taxon>
        <taxon>Pseudomonadota</taxon>
        <taxon>Alphaproteobacteria</taxon>
        <taxon>Rickettsiales</taxon>
        <taxon>Rickettsiaceae</taxon>
        <taxon>Rickettsieae</taxon>
        <taxon>Rickettsia</taxon>
        <taxon>belli group</taxon>
    </lineage>
</organism>
<name>SYFA_RICBR</name>
<keyword id="KW-0030">Aminoacyl-tRNA synthetase</keyword>
<keyword id="KW-0067">ATP-binding</keyword>
<keyword id="KW-0963">Cytoplasm</keyword>
<keyword id="KW-0436">Ligase</keyword>
<keyword id="KW-0460">Magnesium</keyword>
<keyword id="KW-0479">Metal-binding</keyword>
<keyword id="KW-0547">Nucleotide-binding</keyword>
<keyword id="KW-0648">Protein biosynthesis</keyword>
<comment type="catalytic activity">
    <reaction evidence="1">
        <text>tRNA(Phe) + L-phenylalanine + ATP = L-phenylalanyl-tRNA(Phe) + AMP + diphosphate + H(+)</text>
        <dbReference type="Rhea" id="RHEA:19413"/>
        <dbReference type="Rhea" id="RHEA-COMP:9668"/>
        <dbReference type="Rhea" id="RHEA-COMP:9699"/>
        <dbReference type="ChEBI" id="CHEBI:15378"/>
        <dbReference type="ChEBI" id="CHEBI:30616"/>
        <dbReference type="ChEBI" id="CHEBI:33019"/>
        <dbReference type="ChEBI" id="CHEBI:58095"/>
        <dbReference type="ChEBI" id="CHEBI:78442"/>
        <dbReference type="ChEBI" id="CHEBI:78531"/>
        <dbReference type="ChEBI" id="CHEBI:456215"/>
        <dbReference type="EC" id="6.1.1.20"/>
    </reaction>
</comment>
<comment type="cofactor">
    <cofactor evidence="1">
        <name>Mg(2+)</name>
        <dbReference type="ChEBI" id="CHEBI:18420"/>
    </cofactor>
    <text evidence="1">Binds 2 magnesium ions per tetramer.</text>
</comment>
<comment type="subunit">
    <text evidence="1">Tetramer of two alpha and two beta subunits.</text>
</comment>
<comment type="subcellular location">
    <subcellularLocation>
        <location evidence="1">Cytoplasm</location>
    </subcellularLocation>
</comment>
<comment type="similarity">
    <text evidence="1">Belongs to the class-II aminoacyl-tRNA synthetase family. Phe-tRNA synthetase alpha subunit type 1 subfamily.</text>
</comment>
<accession>Q1RIS9</accession>
<reference key="1">
    <citation type="journal article" date="2006" name="PLoS Genet.">
        <title>Genome sequence of Rickettsia bellii illuminates the role of amoebae in gene exchanges between intracellular pathogens.</title>
        <authorList>
            <person name="Ogata H."/>
            <person name="La Scola B."/>
            <person name="Audic S."/>
            <person name="Renesto P."/>
            <person name="Blanc G."/>
            <person name="Robert C."/>
            <person name="Fournier P.-E."/>
            <person name="Claverie J.-M."/>
            <person name="Raoult D."/>
        </authorList>
    </citation>
    <scope>NUCLEOTIDE SEQUENCE [LARGE SCALE GENOMIC DNA]</scope>
    <source>
        <strain>RML369-C</strain>
    </source>
</reference>
<evidence type="ECO:0000255" key="1">
    <source>
        <dbReference type="HAMAP-Rule" id="MF_00281"/>
    </source>
</evidence>